<dbReference type="EMBL" id="L42023">
    <property type="protein sequence ID" value="AAC23245.1"/>
    <property type="molecule type" value="Genomic_DNA"/>
</dbReference>
<dbReference type="PIR" id="E64037">
    <property type="entry name" value="E64037"/>
</dbReference>
<dbReference type="SMR" id="P44265"/>
<dbReference type="STRING" id="71421.HI_1594"/>
<dbReference type="EnsemblBacteria" id="AAC23245">
    <property type="protein sequence ID" value="AAC23245"/>
    <property type="gene ID" value="HI_1594"/>
</dbReference>
<dbReference type="KEGG" id="hin:HI_1594"/>
<dbReference type="eggNOG" id="COG1674">
    <property type="taxonomic scope" value="Bacteria"/>
</dbReference>
<dbReference type="HOGENOM" id="CLU_1238764_0_0_6"/>
<dbReference type="Proteomes" id="UP000000579">
    <property type="component" value="Chromosome"/>
</dbReference>
<dbReference type="GO" id="GO:0005886">
    <property type="term" value="C:plasma membrane"/>
    <property type="evidence" value="ECO:0007669"/>
    <property type="project" value="UniProtKB-SubCell"/>
</dbReference>
<keyword id="KW-1003">Cell membrane</keyword>
<keyword id="KW-0472">Membrane</keyword>
<keyword id="KW-1185">Reference proteome</keyword>
<keyword id="KW-0812">Transmembrane</keyword>
<keyword id="KW-1133">Transmembrane helix</keyword>
<accession>P44265</accession>
<gene>
    <name type="ordered locus">HI_1594</name>
</gene>
<evidence type="ECO:0000255" key="1"/>
<evidence type="ECO:0000305" key="2"/>
<reference key="1">
    <citation type="journal article" date="1995" name="Science">
        <title>Whole-genome random sequencing and assembly of Haemophilus influenzae Rd.</title>
        <authorList>
            <person name="Fleischmann R.D."/>
            <person name="Adams M.D."/>
            <person name="White O."/>
            <person name="Clayton R.A."/>
            <person name="Kirkness E.F."/>
            <person name="Kerlavage A.R."/>
            <person name="Bult C.J."/>
            <person name="Tomb J.-F."/>
            <person name="Dougherty B.A."/>
            <person name="Merrick J.M."/>
            <person name="McKenney K."/>
            <person name="Sutton G.G."/>
            <person name="FitzHugh W."/>
            <person name="Fields C.A."/>
            <person name="Gocayne J.D."/>
            <person name="Scott J.D."/>
            <person name="Shirley R."/>
            <person name="Liu L.-I."/>
            <person name="Glodek A."/>
            <person name="Kelley J.M."/>
            <person name="Weidman J.F."/>
            <person name="Phillips C.A."/>
            <person name="Spriggs T."/>
            <person name="Hedblom E."/>
            <person name="Cotton M.D."/>
            <person name="Utterback T.R."/>
            <person name="Hanna M.C."/>
            <person name="Nguyen D.T."/>
            <person name="Saudek D.M."/>
            <person name="Brandon R.C."/>
            <person name="Fine L.D."/>
            <person name="Fritchman J.L."/>
            <person name="Fuhrmann J.L."/>
            <person name="Geoghagen N.S.M."/>
            <person name="Gnehm C.L."/>
            <person name="McDonald L.A."/>
            <person name="Small K.V."/>
            <person name="Fraser C.M."/>
            <person name="Smith H.O."/>
            <person name="Venter J.C."/>
        </authorList>
    </citation>
    <scope>NUCLEOTIDE SEQUENCE [LARGE SCALE GENOMIC DNA]</scope>
    <source>
        <strain>ATCC 51907 / DSM 11121 / KW20 / Rd</strain>
    </source>
</reference>
<organism>
    <name type="scientific">Haemophilus influenzae (strain ATCC 51907 / DSM 11121 / KW20 / Rd)</name>
    <dbReference type="NCBI Taxonomy" id="71421"/>
    <lineage>
        <taxon>Bacteria</taxon>
        <taxon>Pseudomonadati</taxon>
        <taxon>Pseudomonadota</taxon>
        <taxon>Gammaproteobacteria</taxon>
        <taxon>Pasteurellales</taxon>
        <taxon>Pasteurellaceae</taxon>
        <taxon>Haemophilus</taxon>
    </lineage>
</organism>
<name>Y1594_HAEIN</name>
<feature type="chain" id="PRO_0000078095" description="Uncharacterized protein HI_1594">
    <location>
        <begin position="1"/>
        <end position="223"/>
    </location>
</feature>
<feature type="transmembrane region" description="Helical" evidence="1">
    <location>
        <begin position="1"/>
        <end position="21"/>
    </location>
</feature>
<feature type="transmembrane region" description="Helical" evidence="1">
    <location>
        <begin position="45"/>
        <end position="65"/>
    </location>
</feature>
<proteinExistence type="predicted"/>
<comment type="subcellular location">
    <subcellularLocation>
        <location evidence="2">Cell membrane</location>
        <topology evidence="2">Multi-pass membrane protein</topology>
    </subcellularLocation>
</comment>
<sequence length="223" mass="24714">MLIIGLCVVSMLLLSSNTFYLSGGVLGGSLVVNWFYPVLGKFGSILIGFVLALIGFIFCSGTSLIRLIVTFYHWLTMKNEQSENAEQEKSTEELEQIVIVKSDRSETENLDQNYLNVEQNSEIETVKPSLEAENISIGKSSSHLINISGLNPEVSIKSEYELANEENEKPQFSFGFDSESLPSVNLSSDSDEQRVSKNDFVAVWNKPVKTVVQEDLAIKSKCG</sequence>
<protein>
    <recommendedName>
        <fullName>Uncharacterized protein HI_1594</fullName>
    </recommendedName>
</protein>